<gene>
    <name evidence="1" type="primary">ndhC</name>
</gene>
<comment type="function">
    <text evidence="1">NDH shuttles electrons from NAD(P)H:plastoquinone, via FMN and iron-sulfur (Fe-S) centers, to quinones in the photosynthetic chain and possibly in a chloroplast respiratory chain. The immediate electron acceptor for the enzyme in this species is believed to be plastoquinone. Couples the redox reaction to proton translocation, and thus conserves the redox energy in a proton gradient.</text>
</comment>
<comment type="catalytic activity">
    <reaction evidence="1">
        <text>a plastoquinone + NADH + (n+1) H(+)(in) = a plastoquinol + NAD(+) + n H(+)(out)</text>
        <dbReference type="Rhea" id="RHEA:42608"/>
        <dbReference type="Rhea" id="RHEA-COMP:9561"/>
        <dbReference type="Rhea" id="RHEA-COMP:9562"/>
        <dbReference type="ChEBI" id="CHEBI:15378"/>
        <dbReference type="ChEBI" id="CHEBI:17757"/>
        <dbReference type="ChEBI" id="CHEBI:57540"/>
        <dbReference type="ChEBI" id="CHEBI:57945"/>
        <dbReference type="ChEBI" id="CHEBI:62192"/>
    </reaction>
</comment>
<comment type="catalytic activity">
    <reaction evidence="1">
        <text>a plastoquinone + NADPH + (n+1) H(+)(in) = a plastoquinol + NADP(+) + n H(+)(out)</text>
        <dbReference type="Rhea" id="RHEA:42612"/>
        <dbReference type="Rhea" id="RHEA-COMP:9561"/>
        <dbReference type="Rhea" id="RHEA-COMP:9562"/>
        <dbReference type="ChEBI" id="CHEBI:15378"/>
        <dbReference type="ChEBI" id="CHEBI:17757"/>
        <dbReference type="ChEBI" id="CHEBI:57783"/>
        <dbReference type="ChEBI" id="CHEBI:58349"/>
        <dbReference type="ChEBI" id="CHEBI:62192"/>
    </reaction>
</comment>
<comment type="subunit">
    <text evidence="1">NDH is composed of at least 16 different subunits, 5 of which are encoded in the nucleus.</text>
</comment>
<comment type="subcellular location">
    <subcellularLocation>
        <location evidence="1">Plastid</location>
        <location evidence="1">Chloroplast thylakoid membrane</location>
        <topology evidence="1">Multi-pass membrane protein</topology>
    </subcellularLocation>
</comment>
<comment type="similarity">
    <text evidence="1">Belongs to the complex I subunit 3 family.</text>
</comment>
<accession>Q49KZ3</accession>
<evidence type="ECO:0000255" key="1">
    <source>
        <dbReference type="HAMAP-Rule" id="MF_01394"/>
    </source>
</evidence>
<name>NU3C_EUCGG</name>
<dbReference type="EC" id="7.1.1.-" evidence="1"/>
<dbReference type="EMBL" id="AY780259">
    <property type="protein sequence ID" value="AAX21034.1"/>
    <property type="molecule type" value="Genomic_DNA"/>
</dbReference>
<dbReference type="RefSeq" id="YP_636304.1">
    <property type="nucleotide sequence ID" value="NC_008115.1"/>
</dbReference>
<dbReference type="GeneID" id="4108455"/>
<dbReference type="GO" id="GO:0009535">
    <property type="term" value="C:chloroplast thylakoid membrane"/>
    <property type="evidence" value="ECO:0007669"/>
    <property type="project" value="UniProtKB-SubCell"/>
</dbReference>
<dbReference type="GO" id="GO:0030964">
    <property type="term" value="C:NADH dehydrogenase complex"/>
    <property type="evidence" value="ECO:0007669"/>
    <property type="project" value="TreeGrafter"/>
</dbReference>
<dbReference type="GO" id="GO:0008137">
    <property type="term" value="F:NADH dehydrogenase (ubiquinone) activity"/>
    <property type="evidence" value="ECO:0007669"/>
    <property type="project" value="InterPro"/>
</dbReference>
<dbReference type="GO" id="GO:0048038">
    <property type="term" value="F:quinone binding"/>
    <property type="evidence" value="ECO:0007669"/>
    <property type="project" value="UniProtKB-KW"/>
</dbReference>
<dbReference type="GO" id="GO:0019684">
    <property type="term" value="P:photosynthesis, light reaction"/>
    <property type="evidence" value="ECO:0007669"/>
    <property type="project" value="UniProtKB-UniRule"/>
</dbReference>
<dbReference type="FunFam" id="1.20.58.1610:FF:000001">
    <property type="entry name" value="NAD(P)H-quinone oxidoreductase subunit 3, chloroplastic"/>
    <property type="match status" value="1"/>
</dbReference>
<dbReference type="Gene3D" id="1.20.58.1610">
    <property type="entry name" value="NADH:ubiquinone/plastoquinone oxidoreductase, chain 3"/>
    <property type="match status" value="1"/>
</dbReference>
<dbReference type="HAMAP" id="MF_01394">
    <property type="entry name" value="NDH1_NuoA"/>
    <property type="match status" value="1"/>
</dbReference>
<dbReference type="InterPro" id="IPR023043">
    <property type="entry name" value="NAD(P)H_OxRDtase_bac/plastid"/>
</dbReference>
<dbReference type="InterPro" id="IPR000440">
    <property type="entry name" value="NADH_UbQ/plastoQ_OxRdtase_su3"/>
</dbReference>
<dbReference type="InterPro" id="IPR038430">
    <property type="entry name" value="NDAH_ubi_oxred_su3_sf"/>
</dbReference>
<dbReference type="PANTHER" id="PTHR11058">
    <property type="entry name" value="NADH-UBIQUINONE OXIDOREDUCTASE CHAIN 3"/>
    <property type="match status" value="1"/>
</dbReference>
<dbReference type="PANTHER" id="PTHR11058:SF9">
    <property type="entry name" value="NADH-UBIQUINONE OXIDOREDUCTASE CHAIN 3"/>
    <property type="match status" value="1"/>
</dbReference>
<dbReference type="Pfam" id="PF00507">
    <property type="entry name" value="Oxidored_q4"/>
    <property type="match status" value="1"/>
</dbReference>
<proteinExistence type="inferred from homology"/>
<protein>
    <recommendedName>
        <fullName evidence="1">NAD(P)H-quinone oxidoreductase subunit 3, chloroplastic</fullName>
        <ecNumber evidence="1">7.1.1.-</ecNumber>
    </recommendedName>
    <alternativeName>
        <fullName evidence="1">NAD(P)H dehydrogenase subunit 3</fullName>
    </alternativeName>
    <alternativeName>
        <fullName evidence="1">NADH-plastoquinone oxidoreductase subunit 3</fullName>
    </alternativeName>
</protein>
<keyword id="KW-0150">Chloroplast</keyword>
<keyword id="KW-0472">Membrane</keyword>
<keyword id="KW-0520">NAD</keyword>
<keyword id="KW-0521">NADP</keyword>
<keyword id="KW-0934">Plastid</keyword>
<keyword id="KW-0618">Plastoquinone</keyword>
<keyword id="KW-0874">Quinone</keyword>
<keyword id="KW-0793">Thylakoid</keyword>
<keyword id="KW-1278">Translocase</keyword>
<keyword id="KW-0812">Transmembrane</keyword>
<keyword id="KW-1133">Transmembrane helix</keyword>
<keyword id="KW-0813">Transport</keyword>
<feature type="chain" id="PRO_0000362832" description="NAD(P)H-quinone oxidoreductase subunit 3, chloroplastic">
    <location>
        <begin position="1"/>
        <end position="120"/>
    </location>
</feature>
<feature type="transmembrane region" description="Helical" evidence="1">
    <location>
        <begin position="9"/>
        <end position="29"/>
    </location>
</feature>
<feature type="transmembrane region" description="Helical" evidence="1">
    <location>
        <begin position="64"/>
        <end position="84"/>
    </location>
</feature>
<feature type="transmembrane region" description="Helical" evidence="1">
    <location>
        <begin position="88"/>
        <end position="108"/>
    </location>
</feature>
<geneLocation type="chloroplast"/>
<reference key="1">
    <citation type="journal article" date="2005" name="DNA Res.">
        <title>Complete nucleotide sequence of the chloroplast genome from the Tasmanian blue gum, Eucalyptus globulus (Myrtaceae).</title>
        <authorList>
            <person name="Steane D.A."/>
        </authorList>
    </citation>
    <scope>NUCLEOTIDE SEQUENCE [LARGE SCALE GENOMIC DNA]</scope>
</reference>
<organism>
    <name type="scientific">Eucalyptus globulus subsp. globulus</name>
    <name type="common">Tasmanian blue gum</name>
    <dbReference type="NCBI Taxonomy" id="71271"/>
    <lineage>
        <taxon>Eukaryota</taxon>
        <taxon>Viridiplantae</taxon>
        <taxon>Streptophyta</taxon>
        <taxon>Embryophyta</taxon>
        <taxon>Tracheophyta</taxon>
        <taxon>Spermatophyta</taxon>
        <taxon>Magnoliopsida</taxon>
        <taxon>eudicotyledons</taxon>
        <taxon>Gunneridae</taxon>
        <taxon>Pentapetalae</taxon>
        <taxon>rosids</taxon>
        <taxon>malvids</taxon>
        <taxon>Myrtales</taxon>
        <taxon>Myrtaceae</taxon>
        <taxon>Myrtoideae</taxon>
        <taxon>Eucalypteae</taxon>
        <taxon>Eucalyptus</taxon>
    </lineage>
</organism>
<sequence>MFLLYEYDIFWAFLIISSVIPILAFXISGILAPISKGPEKLSSYESGIEPMGDAWLQFRIRYYMFALVFVVFDVETVFLYPWAMSFDVLGVSVFIEALIFVLILIVGLVYAWRKGALEWS</sequence>